<gene>
    <name evidence="1" type="primary">plsX</name>
    <name type="ordered locus">EcE24377A_1211</name>
</gene>
<name>PLSX_ECO24</name>
<dbReference type="EC" id="2.3.1.274" evidence="1"/>
<dbReference type="EMBL" id="CP000800">
    <property type="protein sequence ID" value="ABV18316.1"/>
    <property type="molecule type" value="Genomic_DNA"/>
</dbReference>
<dbReference type="RefSeq" id="WP_000197578.1">
    <property type="nucleotide sequence ID" value="NC_009801.1"/>
</dbReference>
<dbReference type="SMR" id="A7ZKJ3"/>
<dbReference type="GeneID" id="93776318"/>
<dbReference type="KEGG" id="ecw:EcE24377A_1211"/>
<dbReference type="HOGENOM" id="CLU_039379_1_0_6"/>
<dbReference type="UniPathway" id="UPA00085"/>
<dbReference type="Proteomes" id="UP000001122">
    <property type="component" value="Chromosome"/>
</dbReference>
<dbReference type="GO" id="GO:0005737">
    <property type="term" value="C:cytoplasm"/>
    <property type="evidence" value="ECO:0007669"/>
    <property type="project" value="UniProtKB-SubCell"/>
</dbReference>
<dbReference type="GO" id="GO:0043811">
    <property type="term" value="F:phosphate:acyl-[acyl carrier protein] acyltransferase activity"/>
    <property type="evidence" value="ECO:0007669"/>
    <property type="project" value="UniProtKB-UniRule"/>
</dbReference>
<dbReference type="GO" id="GO:0006633">
    <property type="term" value="P:fatty acid biosynthetic process"/>
    <property type="evidence" value="ECO:0007669"/>
    <property type="project" value="UniProtKB-UniRule"/>
</dbReference>
<dbReference type="GO" id="GO:0008654">
    <property type="term" value="P:phospholipid biosynthetic process"/>
    <property type="evidence" value="ECO:0007669"/>
    <property type="project" value="UniProtKB-KW"/>
</dbReference>
<dbReference type="FunFam" id="3.40.718.10:FF:000008">
    <property type="entry name" value="Phosphate acyltransferase"/>
    <property type="match status" value="1"/>
</dbReference>
<dbReference type="Gene3D" id="3.40.718.10">
    <property type="entry name" value="Isopropylmalate Dehydrogenase"/>
    <property type="match status" value="1"/>
</dbReference>
<dbReference type="HAMAP" id="MF_00019">
    <property type="entry name" value="PlsX"/>
    <property type="match status" value="1"/>
</dbReference>
<dbReference type="InterPro" id="IPR003664">
    <property type="entry name" value="FA_synthesis"/>
</dbReference>
<dbReference type="InterPro" id="IPR012281">
    <property type="entry name" value="Phospholipid_synth_PlsX-like"/>
</dbReference>
<dbReference type="NCBIfam" id="TIGR00182">
    <property type="entry name" value="plsX"/>
    <property type="match status" value="1"/>
</dbReference>
<dbReference type="PANTHER" id="PTHR30100">
    <property type="entry name" value="FATTY ACID/PHOSPHOLIPID SYNTHESIS PROTEIN PLSX"/>
    <property type="match status" value="1"/>
</dbReference>
<dbReference type="PANTHER" id="PTHR30100:SF1">
    <property type="entry name" value="PHOSPHATE ACYLTRANSFERASE"/>
    <property type="match status" value="1"/>
</dbReference>
<dbReference type="Pfam" id="PF02504">
    <property type="entry name" value="FA_synthesis"/>
    <property type="match status" value="1"/>
</dbReference>
<dbReference type="PIRSF" id="PIRSF002465">
    <property type="entry name" value="Phsphlp_syn_PlsX"/>
    <property type="match status" value="1"/>
</dbReference>
<dbReference type="SUPFAM" id="SSF53659">
    <property type="entry name" value="Isocitrate/Isopropylmalate dehydrogenase-like"/>
    <property type="match status" value="1"/>
</dbReference>
<comment type="function">
    <text evidence="1">Catalyzes the reversible formation of acyl-phosphate (acyl-PO(4)) from acyl-[acyl-carrier-protein] (acyl-ACP). This enzyme utilizes acyl-ACP as fatty acyl donor, but not acyl-CoA.</text>
</comment>
<comment type="catalytic activity">
    <reaction evidence="1">
        <text>a fatty acyl-[ACP] + phosphate = an acyl phosphate + holo-[ACP]</text>
        <dbReference type="Rhea" id="RHEA:42292"/>
        <dbReference type="Rhea" id="RHEA-COMP:9685"/>
        <dbReference type="Rhea" id="RHEA-COMP:14125"/>
        <dbReference type="ChEBI" id="CHEBI:43474"/>
        <dbReference type="ChEBI" id="CHEBI:59918"/>
        <dbReference type="ChEBI" id="CHEBI:64479"/>
        <dbReference type="ChEBI" id="CHEBI:138651"/>
        <dbReference type="EC" id="2.3.1.274"/>
    </reaction>
</comment>
<comment type="pathway">
    <text evidence="1">Lipid metabolism; phospholipid metabolism.</text>
</comment>
<comment type="subunit">
    <text evidence="1">Homodimer. Probably interacts with PlsY.</text>
</comment>
<comment type="subcellular location">
    <subcellularLocation>
        <location evidence="1">Cytoplasm</location>
    </subcellularLocation>
    <text evidence="1">Associated with the membrane possibly through PlsY.</text>
</comment>
<comment type="similarity">
    <text evidence="1">Belongs to the PlsX family.</text>
</comment>
<accession>A7ZKJ3</accession>
<keyword id="KW-0963">Cytoplasm</keyword>
<keyword id="KW-0444">Lipid biosynthesis</keyword>
<keyword id="KW-0443">Lipid metabolism</keyword>
<keyword id="KW-0594">Phospholipid biosynthesis</keyword>
<keyword id="KW-1208">Phospholipid metabolism</keyword>
<keyword id="KW-1185">Reference proteome</keyword>
<keyword id="KW-0808">Transferase</keyword>
<protein>
    <recommendedName>
        <fullName evidence="1">Phosphate acyltransferase</fullName>
        <ecNumber evidence="1">2.3.1.274</ecNumber>
    </recommendedName>
    <alternativeName>
        <fullName evidence="1">Acyl-ACP phosphotransacylase</fullName>
    </alternativeName>
    <alternativeName>
        <fullName evidence="1">Acyl-[acyl-carrier-protein]--phosphate acyltransferase</fullName>
    </alternativeName>
    <alternativeName>
        <fullName evidence="1">Phosphate-acyl-ACP acyltransferase</fullName>
    </alternativeName>
</protein>
<feature type="chain" id="PRO_1000057172" description="Phosphate acyltransferase">
    <location>
        <begin position="1"/>
        <end position="356"/>
    </location>
</feature>
<evidence type="ECO:0000255" key="1">
    <source>
        <dbReference type="HAMAP-Rule" id="MF_00019"/>
    </source>
</evidence>
<proteinExistence type="inferred from homology"/>
<reference key="1">
    <citation type="journal article" date="2008" name="J. Bacteriol.">
        <title>The pangenome structure of Escherichia coli: comparative genomic analysis of E. coli commensal and pathogenic isolates.</title>
        <authorList>
            <person name="Rasko D.A."/>
            <person name="Rosovitz M.J."/>
            <person name="Myers G.S.A."/>
            <person name="Mongodin E.F."/>
            <person name="Fricke W.F."/>
            <person name="Gajer P."/>
            <person name="Crabtree J."/>
            <person name="Sebaihia M."/>
            <person name="Thomson N.R."/>
            <person name="Chaudhuri R."/>
            <person name="Henderson I.R."/>
            <person name="Sperandio V."/>
            <person name="Ravel J."/>
        </authorList>
    </citation>
    <scope>NUCLEOTIDE SEQUENCE [LARGE SCALE GENOMIC DNA]</scope>
    <source>
        <strain>E24377A / ETEC</strain>
    </source>
</reference>
<organism>
    <name type="scientific">Escherichia coli O139:H28 (strain E24377A / ETEC)</name>
    <dbReference type="NCBI Taxonomy" id="331111"/>
    <lineage>
        <taxon>Bacteria</taxon>
        <taxon>Pseudomonadati</taxon>
        <taxon>Pseudomonadota</taxon>
        <taxon>Gammaproteobacteria</taxon>
        <taxon>Enterobacterales</taxon>
        <taxon>Enterobacteriaceae</taxon>
        <taxon>Escherichia</taxon>
    </lineage>
</organism>
<sequence length="356" mass="38224">MTRLTLALDVMGGDFGPSVTVPAALQALNSNSQLTLLLVGNPDAITPLLAKADFEQRSRLQIIPAQSVIASDARPSQAIRASRGSSMRVALELVKEGRAQACVSAGNTGALMGLAKLLLKPLEGIERPALVTVLPHQQKGKTVVLDLGANVDCDSTMLVQFAIMGSVLAEEVVEIPNPRVALLNIGEEEVKGLDSIRDASAVLKTIPSINYIGYLEANELLTGKTDVLVCDGFTGNVTLKTMEGVVRMFLSLLKSQGEGKKRSWWLLLLKRWLQKSLTRRFSHLNPDQYNGACLLGLRGTVIKSHGAANQRAFAVAIEQAVQAVQRQVPQRIAARLESVYPAGFELLDGGKSGTLR</sequence>